<keyword id="KW-0030">Aminoacyl-tRNA synthetase</keyword>
<keyword id="KW-0067">ATP-binding</keyword>
<keyword id="KW-0963">Cytoplasm</keyword>
<keyword id="KW-0436">Ligase</keyword>
<keyword id="KW-0479">Metal-binding</keyword>
<keyword id="KW-0547">Nucleotide-binding</keyword>
<keyword id="KW-0648">Protein biosynthesis</keyword>
<keyword id="KW-1185">Reference proteome</keyword>
<keyword id="KW-0694">RNA-binding</keyword>
<keyword id="KW-0820">tRNA-binding</keyword>
<keyword id="KW-0862">Zinc</keyword>
<proteinExistence type="inferred from homology"/>
<sequence>MWSSAEIRKTFLEYFEERGHSVVESSSLVPVNDPTLLFTNAGMNQFKDVFLGLDKRKYVRATSSQKCVRAGGKHNDLDTVGRTPRHHTFFEMLGNFSFGDYFKREAIGYAWEFLTEVVGLPEEKLWVTIYQDDDEAADLWPEISGIDPGRIVRLGEKDNFWSMGDTGPCGPCSEILYDRGIEYSCGAPDCGIGVCDCDRWLEIWNLVFMQFNRDESGEMTPLPRPSIDTGMGLERLSSILQGVDSNFDTDLFIPIIKRIEELTGKAYEQGERGFPFRVIADHSRACSFLIADGVLPSNDGRGYVLRRILRRALRFGRFLGIEGSFLYKNVDVVCDIMQEAYPELLEKQDFIKEVIRLEEERFLLTLNDGLKKAEEIMERARQRGDNVIPGEEAFMLYDTYGFPLDLTEDMAEENQFTLDKAGFDRSMEEQRQRARQANKGEDLLGQERLLSEKLAGIAPSSFTGYENSRDESVLLAIIKGSELMDKALNGEEVILITARTPFYAESGGQVADCGIIKGQEGLLRVQDVKKLSAWILHYGIVEGVLTTGEGVSLQLDDPARMDTARNHTATHLLHRALREVLGEHAQQKGSLVEPARLRFDFSHLKALSSEELSRIEQMVNEAIWKLYPVTTTVTALGQAREMGAMALFGEKYGEEVRVVQVDTYSSELCGGTHVQNTGQIGLFKITGEGSIGSGLRRIEAITGSYALEYIKQLEDELKKAASALRSSPLELAKRIENLNNSLKEKDKEIENLLQRLSRSSSDELVNKAFQLNDAWILIEEVDIEDPGSLRQNAEMLKDKLGRAIVMLASIKGEKVSFVCFVSKDLLEQGLHAGKIVAAAAQVAGGGGGGRPDMAQAGGRDKSKISEALAEARKMVKKTLS</sequence>
<accession>Q0AZQ1</accession>
<evidence type="ECO:0000255" key="1">
    <source>
        <dbReference type="HAMAP-Rule" id="MF_00036"/>
    </source>
</evidence>
<comment type="function">
    <text evidence="1">Catalyzes the attachment of alanine to tRNA(Ala) in a two-step reaction: alanine is first activated by ATP to form Ala-AMP and then transferred to the acceptor end of tRNA(Ala). Also edits incorrectly charged Ser-tRNA(Ala) and Gly-tRNA(Ala) via its editing domain.</text>
</comment>
<comment type="catalytic activity">
    <reaction evidence="1">
        <text>tRNA(Ala) + L-alanine + ATP = L-alanyl-tRNA(Ala) + AMP + diphosphate</text>
        <dbReference type="Rhea" id="RHEA:12540"/>
        <dbReference type="Rhea" id="RHEA-COMP:9657"/>
        <dbReference type="Rhea" id="RHEA-COMP:9923"/>
        <dbReference type="ChEBI" id="CHEBI:30616"/>
        <dbReference type="ChEBI" id="CHEBI:33019"/>
        <dbReference type="ChEBI" id="CHEBI:57972"/>
        <dbReference type="ChEBI" id="CHEBI:78442"/>
        <dbReference type="ChEBI" id="CHEBI:78497"/>
        <dbReference type="ChEBI" id="CHEBI:456215"/>
        <dbReference type="EC" id="6.1.1.7"/>
    </reaction>
</comment>
<comment type="cofactor">
    <cofactor evidence="1">
        <name>Zn(2+)</name>
        <dbReference type="ChEBI" id="CHEBI:29105"/>
    </cofactor>
    <text evidence="1">Binds 1 zinc ion per subunit.</text>
</comment>
<comment type="subcellular location">
    <subcellularLocation>
        <location evidence="1">Cytoplasm</location>
    </subcellularLocation>
</comment>
<comment type="domain">
    <text evidence="1">Consists of three domains; the N-terminal catalytic domain, the editing domain and the C-terminal C-Ala domain. The editing domain removes incorrectly charged amino acids, while the C-Ala domain, along with tRNA(Ala), serves as a bridge to cooperatively bring together the editing and aminoacylation centers thus stimulating deacylation of misacylated tRNAs.</text>
</comment>
<comment type="similarity">
    <text evidence="1">Belongs to the class-II aminoacyl-tRNA synthetase family.</text>
</comment>
<feature type="chain" id="PRO_0000347845" description="Alanine--tRNA ligase">
    <location>
        <begin position="1"/>
        <end position="880"/>
    </location>
</feature>
<feature type="binding site" evidence="1">
    <location>
        <position position="567"/>
    </location>
    <ligand>
        <name>Zn(2+)</name>
        <dbReference type="ChEBI" id="CHEBI:29105"/>
    </ligand>
</feature>
<feature type="binding site" evidence="1">
    <location>
        <position position="571"/>
    </location>
    <ligand>
        <name>Zn(2+)</name>
        <dbReference type="ChEBI" id="CHEBI:29105"/>
    </ligand>
</feature>
<feature type="binding site" evidence="1">
    <location>
        <position position="669"/>
    </location>
    <ligand>
        <name>Zn(2+)</name>
        <dbReference type="ChEBI" id="CHEBI:29105"/>
    </ligand>
</feature>
<feature type="binding site" evidence="1">
    <location>
        <position position="673"/>
    </location>
    <ligand>
        <name>Zn(2+)</name>
        <dbReference type="ChEBI" id="CHEBI:29105"/>
    </ligand>
</feature>
<reference key="1">
    <citation type="journal article" date="2010" name="Environ. Microbiol.">
        <title>The genome of Syntrophomonas wolfei: new insights into syntrophic metabolism and biohydrogen production.</title>
        <authorList>
            <person name="Sieber J.R."/>
            <person name="Sims D.R."/>
            <person name="Han C."/>
            <person name="Kim E."/>
            <person name="Lykidis A."/>
            <person name="Lapidus A.L."/>
            <person name="McDonnald E."/>
            <person name="Rohlin L."/>
            <person name="Culley D.E."/>
            <person name="Gunsalus R."/>
            <person name="McInerney M.J."/>
        </authorList>
    </citation>
    <scope>NUCLEOTIDE SEQUENCE [LARGE SCALE GENOMIC DNA]</scope>
    <source>
        <strain>DSM 2245B / Goettingen</strain>
    </source>
</reference>
<dbReference type="EC" id="6.1.1.7" evidence="1"/>
<dbReference type="EMBL" id="CP000448">
    <property type="protein sequence ID" value="ABI67803.1"/>
    <property type="molecule type" value="Genomic_DNA"/>
</dbReference>
<dbReference type="RefSeq" id="WP_011639911.1">
    <property type="nucleotide sequence ID" value="NC_008346.1"/>
</dbReference>
<dbReference type="SMR" id="Q0AZQ1"/>
<dbReference type="STRING" id="335541.Swol_0468"/>
<dbReference type="KEGG" id="swo:Swol_0468"/>
<dbReference type="eggNOG" id="COG0013">
    <property type="taxonomic scope" value="Bacteria"/>
</dbReference>
<dbReference type="HOGENOM" id="CLU_004485_1_1_9"/>
<dbReference type="OrthoDB" id="9803884at2"/>
<dbReference type="Proteomes" id="UP000001968">
    <property type="component" value="Chromosome"/>
</dbReference>
<dbReference type="GO" id="GO:0005829">
    <property type="term" value="C:cytosol"/>
    <property type="evidence" value="ECO:0007669"/>
    <property type="project" value="TreeGrafter"/>
</dbReference>
<dbReference type="GO" id="GO:0004813">
    <property type="term" value="F:alanine-tRNA ligase activity"/>
    <property type="evidence" value="ECO:0007669"/>
    <property type="project" value="UniProtKB-UniRule"/>
</dbReference>
<dbReference type="GO" id="GO:0002161">
    <property type="term" value="F:aminoacyl-tRNA deacylase activity"/>
    <property type="evidence" value="ECO:0007669"/>
    <property type="project" value="TreeGrafter"/>
</dbReference>
<dbReference type="GO" id="GO:0005524">
    <property type="term" value="F:ATP binding"/>
    <property type="evidence" value="ECO:0007669"/>
    <property type="project" value="UniProtKB-UniRule"/>
</dbReference>
<dbReference type="GO" id="GO:0140096">
    <property type="term" value="F:catalytic activity, acting on a protein"/>
    <property type="evidence" value="ECO:0007669"/>
    <property type="project" value="UniProtKB-ARBA"/>
</dbReference>
<dbReference type="GO" id="GO:0016740">
    <property type="term" value="F:transferase activity"/>
    <property type="evidence" value="ECO:0007669"/>
    <property type="project" value="UniProtKB-ARBA"/>
</dbReference>
<dbReference type="GO" id="GO:0000049">
    <property type="term" value="F:tRNA binding"/>
    <property type="evidence" value="ECO:0007669"/>
    <property type="project" value="UniProtKB-KW"/>
</dbReference>
<dbReference type="GO" id="GO:0008270">
    <property type="term" value="F:zinc ion binding"/>
    <property type="evidence" value="ECO:0007669"/>
    <property type="project" value="UniProtKB-UniRule"/>
</dbReference>
<dbReference type="GO" id="GO:0006419">
    <property type="term" value="P:alanyl-tRNA aminoacylation"/>
    <property type="evidence" value="ECO:0007669"/>
    <property type="project" value="UniProtKB-UniRule"/>
</dbReference>
<dbReference type="CDD" id="cd00673">
    <property type="entry name" value="AlaRS_core"/>
    <property type="match status" value="1"/>
</dbReference>
<dbReference type="FunFam" id="3.10.310.40:FF:000001">
    <property type="entry name" value="Alanine--tRNA ligase"/>
    <property type="match status" value="1"/>
</dbReference>
<dbReference type="FunFam" id="3.30.54.20:FF:000001">
    <property type="entry name" value="Alanine--tRNA ligase"/>
    <property type="match status" value="1"/>
</dbReference>
<dbReference type="FunFam" id="3.30.930.10:FF:000004">
    <property type="entry name" value="Alanine--tRNA ligase"/>
    <property type="match status" value="1"/>
</dbReference>
<dbReference type="FunFam" id="3.30.980.10:FF:000004">
    <property type="entry name" value="Alanine--tRNA ligase, cytoplasmic"/>
    <property type="match status" value="1"/>
</dbReference>
<dbReference type="Gene3D" id="2.40.30.130">
    <property type="match status" value="1"/>
</dbReference>
<dbReference type="Gene3D" id="3.10.310.40">
    <property type="match status" value="1"/>
</dbReference>
<dbReference type="Gene3D" id="3.30.54.20">
    <property type="match status" value="1"/>
</dbReference>
<dbReference type="Gene3D" id="6.10.250.550">
    <property type="match status" value="1"/>
</dbReference>
<dbReference type="Gene3D" id="3.30.930.10">
    <property type="entry name" value="Bira Bifunctional Protein, Domain 2"/>
    <property type="match status" value="1"/>
</dbReference>
<dbReference type="Gene3D" id="3.30.980.10">
    <property type="entry name" value="Threonyl-trna Synthetase, Chain A, domain 2"/>
    <property type="match status" value="1"/>
</dbReference>
<dbReference type="HAMAP" id="MF_00036_B">
    <property type="entry name" value="Ala_tRNA_synth_B"/>
    <property type="match status" value="1"/>
</dbReference>
<dbReference type="InterPro" id="IPR045864">
    <property type="entry name" value="aa-tRNA-synth_II/BPL/LPL"/>
</dbReference>
<dbReference type="InterPro" id="IPR002318">
    <property type="entry name" value="Ala-tRNA-lgiase_IIc"/>
</dbReference>
<dbReference type="InterPro" id="IPR018162">
    <property type="entry name" value="Ala-tRNA-ligase_IIc_anticod-bd"/>
</dbReference>
<dbReference type="InterPro" id="IPR018165">
    <property type="entry name" value="Ala-tRNA-synth_IIc_core"/>
</dbReference>
<dbReference type="InterPro" id="IPR018164">
    <property type="entry name" value="Ala-tRNA-synth_IIc_N"/>
</dbReference>
<dbReference type="InterPro" id="IPR050058">
    <property type="entry name" value="Ala-tRNA_ligase"/>
</dbReference>
<dbReference type="InterPro" id="IPR023033">
    <property type="entry name" value="Ala_tRNA_ligase_euk/bac"/>
</dbReference>
<dbReference type="InterPro" id="IPR003156">
    <property type="entry name" value="DHHA1_dom"/>
</dbReference>
<dbReference type="InterPro" id="IPR018163">
    <property type="entry name" value="Thr/Ala-tRNA-synth_IIc_edit"/>
</dbReference>
<dbReference type="InterPro" id="IPR009000">
    <property type="entry name" value="Transl_B-barrel_sf"/>
</dbReference>
<dbReference type="InterPro" id="IPR012947">
    <property type="entry name" value="tRNA_SAD"/>
</dbReference>
<dbReference type="NCBIfam" id="TIGR00344">
    <property type="entry name" value="alaS"/>
    <property type="match status" value="1"/>
</dbReference>
<dbReference type="PANTHER" id="PTHR11777:SF9">
    <property type="entry name" value="ALANINE--TRNA LIGASE, CYTOPLASMIC"/>
    <property type="match status" value="1"/>
</dbReference>
<dbReference type="PANTHER" id="PTHR11777">
    <property type="entry name" value="ALANYL-TRNA SYNTHETASE"/>
    <property type="match status" value="1"/>
</dbReference>
<dbReference type="Pfam" id="PF02272">
    <property type="entry name" value="DHHA1"/>
    <property type="match status" value="1"/>
</dbReference>
<dbReference type="Pfam" id="PF01411">
    <property type="entry name" value="tRNA-synt_2c"/>
    <property type="match status" value="1"/>
</dbReference>
<dbReference type="Pfam" id="PF07973">
    <property type="entry name" value="tRNA_SAD"/>
    <property type="match status" value="1"/>
</dbReference>
<dbReference type="PRINTS" id="PR00980">
    <property type="entry name" value="TRNASYNTHALA"/>
</dbReference>
<dbReference type="SMART" id="SM00863">
    <property type="entry name" value="tRNA_SAD"/>
    <property type="match status" value="1"/>
</dbReference>
<dbReference type="SUPFAM" id="SSF55681">
    <property type="entry name" value="Class II aaRS and biotin synthetases"/>
    <property type="match status" value="1"/>
</dbReference>
<dbReference type="SUPFAM" id="SSF101353">
    <property type="entry name" value="Putative anticodon-binding domain of alanyl-tRNA synthetase (AlaRS)"/>
    <property type="match status" value="1"/>
</dbReference>
<dbReference type="SUPFAM" id="SSF55186">
    <property type="entry name" value="ThrRS/AlaRS common domain"/>
    <property type="match status" value="1"/>
</dbReference>
<dbReference type="SUPFAM" id="SSF50447">
    <property type="entry name" value="Translation proteins"/>
    <property type="match status" value="1"/>
</dbReference>
<dbReference type="PROSITE" id="PS50860">
    <property type="entry name" value="AA_TRNA_LIGASE_II_ALA"/>
    <property type="match status" value="1"/>
</dbReference>
<organism>
    <name type="scientific">Syntrophomonas wolfei subsp. wolfei (strain DSM 2245B / Goettingen)</name>
    <dbReference type="NCBI Taxonomy" id="335541"/>
    <lineage>
        <taxon>Bacteria</taxon>
        <taxon>Bacillati</taxon>
        <taxon>Bacillota</taxon>
        <taxon>Clostridia</taxon>
        <taxon>Eubacteriales</taxon>
        <taxon>Syntrophomonadaceae</taxon>
        <taxon>Syntrophomonas</taxon>
    </lineage>
</organism>
<protein>
    <recommendedName>
        <fullName evidence="1">Alanine--tRNA ligase</fullName>
        <ecNumber evidence="1">6.1.1.7</ecNumber>
    </recommendedName>
    <alternativeName>
        <fullName evidence="1">Alanyl-tRNA synthetase</fullName>
        <shortName evidence="1">AlaRS</shortName>
    </alternativeName>
</protein>
<gene>
    <name evidence="1" type="primary">alaS</name>
    <name type="ordered locus">Swol_0468</name>
</gene>
<name>SYA_SYNWW</name>